<organism>
    <name type="scientific">Bartonella bacilliformis</name>
    <dbReference type="NCBI Taxonomy" id="774"/>
    <lineage>
        <taxon>Bacteria</taxon>
        <taxon>Pseudomonadati</taxon>
        <taxon>Pseudomonadota</taxon>
        <taxon>Alphaproteobacteria</taxon>
        <taxon>Hyphomicrobiales</taxon>
        <taxon>Bartonellaceae</taxon>
        <taxon>Bartonella</taxon>
    </lineage>
</organism>
<protein>
    <recommendedName>
        <fullName evidence="1">Cell division protein FtsQ</fullName>
    </recommendedName>
</protein>
<name>FTSQ_BARBA</name>
<gene>
    <name evidence="1" type="primary">ftsQ</name>
</gene>
<comment type="function">
    <text evidence="1">Essential cell division protein.</text>
</comment>
<comment type="subcellular location">
    <subcellularLocation>
        <location evidence="1">Cell inner membrane</location>
        <topology evidence="1">Single-pass type II membrane protein</topology>
    </subcellularLocation>
    <text evidence="1">Localizes to the division septum.</text>
</comment>
<comment type="similarity">
    <text evidence="1">Belongs to the FtsQ/DivIB family. FtsQ subfamily.</text>
</comment>
<accession>Q9X5H9</accession>
<accession>Q6J575</accession>
<sequence length="308" mass="35109">MDSGGRIVYALNVEKTGFLRILSVTVLQRLYRRVFWFLFKCVAGIDVPRHAGSLAVFSFFFLSILYSISSGGYMNHFMKVAISNSGFLVTHVDMSGNKRMMEQDILKVLGLDEYPSMISFDIDKARFILEQQPWVRLADVQKIYPDRLRISLVEREPYAIWQHNGEMNIIDDTGYVIAPFQAGLVQNLSFVVGQGAQKTAKLFIQALSVYPQLQNHVRAYVRVGDRRWDLFLANGMRIMLPENGAIERLASFIEQGVAEDLFSRDISDIDLRLSDRITVSLSDEALTRRRAVVLEEERLLKMLKAGSV</sequence>
<proteinExistence type="inferred from homology"/>
<keyword id="KW-0131">Cell cycle</keyword>
<keyword id="KW-0132">Cell division</keyword>
<keyword id="KW-0997">Cell inner membrane</keyword>
<keyword id="KW-1003">Cell membrane</keyword>
<keyword id="KW-0472">Membrane</keyword>
<keyword id="KW-0812">Transmembrane</keyword>
<keyword id="KW-1133">Transmembrane helix</keyword>
<feature type="chain" id="PRO_0000160577" description="Cell division protein FtsQ">
    <location>
        <begin position="1"/>
        <end position="308"/>
    </location>
</feature>
<feature type="topological domain" description="Cytoplasmic" evidence="1">
    <location>
        <begin position="1"/>
        <end position="53"/>
    </location>
</feature>
<feature type="transmembrane region" description="Helical" evidence="1">
    <location>
        <begin position="54"/>
        <end position="74"/>
    </location>
</feature>
<feature type="topological domain" description="Periplasmic" evidence="1">
    <location>
        <begin position="75"/>
        <end position="308"/>
    </location>
</feature>
<feature type="domain" description="POTRA" evidence="2">
    <location>
        <begin position="87"/>
        <end position="155"/>
    </location>
</feature>
<reference key="1">
    <citation type="journal article" date="2003" name="DNA Cell Biol.">
        <title>Identification and characterization of the DdlB, FtsQ and FtsA genes upstream of FtsZ in Bartonella bacilliformis and Bartonella henselae.</title>
        <authorList>
            <person name="Fiskus W."/>
            <person name="Padmalayam I."/>
            <person name="Kelly T."/>
            <person name="Guibao C."/>
            <person name="Baumstark B.R."/>
        </authorList>
    </citation>
    <scope>NUCLEOTIDE SEQUENCE [GENOMIC DNA]</scope>
    <source>
        <strain>ATCC 35686 / KC584 / NCTC 12139</strain>
    </source>
</reference>
<evidence type="ECO:0000255" key="1">
    <source>
        <dbReference type="HAMAP-Rule" id="MF_00911"/>
    </source>
</evidence>
<evidence type="ECO:0000255" key="2">
    <source>
        <dbReference type="PROSITE-ProRule" id="PRU01115"/>
    </source>
</evidence>
<dbReference type="EMBL" id="AY599560">
    <property type="protein sequence ID" value="AAT38534.1"/>
    <property type="molecule type" value="Genomic_DNA"/>
</dbReference>
<dbReference type="SMR" id="Q9X5H9"/>
<dbReference type="OMA" id="KANPWIA"/>
<dbReference type="GO" id="GO:0032153">
    <property type="term" value="C:cell division site"/>
    <property type="evidence" value="ECO:0007669"/>
    <property type="project" value="UniProtKB-UniRule"/>
</dbReference>
<dbReference type="GO" id="GO:0005886">
    <property type="term" value="C:plasma membrane"/>
    <property type="evidence" value="ECO:0007669"/>
    <property type="project" value="UniProtKB-SubCell"/>
</dbReference>
<dbReference type="GO" id="GO:0090529">
    <property type="term" value="P:cell septum assembly"/>
    <property type="evidence" value="ECO:0007669"/>
    <property type="project" value="InterPro"/>
</dbReference>
<dbReference type="GO" id="GO:0043093">
    <property type="term" value="P:FtsZ-dependent cytokinesis"/>
    <property type="evidence" value="ECO:0007669"/>
    <property type="project" value="UniProtKB-UniRule"/>
</dbReference>
<dbReference type="Gene3D" id="3.40.50.11690">
    <property type="entry name" value="Cell division protein FtsQ/DivIB"/>
    <property type="match status" value="1"/>
</dbReference>
<dbReference type="Gene3D" id="3.10.20.310">
    <property type="entry name" value="membrane protein fhac"/>
    <property type="match status" value="1"/>
</dbReference>
<dbReference type="HAMAP" id="MF_00911">
    <property type="entry name" value="FtsQ_subfam"/>
    <property type="match status" value="1"/>
</dbReference>
<dbReference type="InterPro" id="IPR005548">
    <property type="entry name" value="Cell_div_FtsQ/DivIB_C"/>
</dbReference>
<dbReference type="InterPro" id="IPR026579">
    <property type="entry name" value="FtsQ"/>
</dbReference>
<dbReference type="InterPro" id="IPR045335">
    <property type="entry name" value="FtsQ_C_sf"/>
</dbReference>
<dbReference type="InterPro" id="IPR034746">
    <property type="entry name" value="POTRA"/>
</dbReference>
<dbReference type="InterPro" id="IPR013685">
    <property type="entry name" value="POTRA_FtsQ_type"/>
</dbReference>
<dbReference type="PANTHER" id="PTHR35851">
    <property type="entry name" value="CELL DIVISION PROTEIN FTSQ"/>
    <property type="match status" value="1"/>
</dbReference>
<dbReference type="PANTHER" id="PTHR35851:SF1">
    <property type="entry name" value="CELL DIVISION PROTEIN FTSQ"/>
    <property type="match status" value="1"/>
</dbReference>
<dbReference type="Pfam" id="PF03799">
    <property type="entry name" value="FtsQ_DivIB_C"/>
    <property type="match status" value="1"/>
</dbReference>
<dbReference type="Pfam" id="PF08478">
    <property type="entry name" value="POTRA_1"/>
    <property type="match status" value="1"/>
</dbReference>
<dbReference type="PROSITE" id="PS51779">
    <property type="entry name" value="POTRA"/>
    <property type="match status" value="1"/>
</dbReference>